<organism>
    <name type="scientific">Dehalococcoides mccartyi (strain ATCC BAA-2266 / KCTC 15142 / 195)</name>
    <name type="common">Dehalococcoides ethenogenes (strain 195)</name>
    <dbReference type="NCBI Taxonomy" id="243164"/>
    <lineage>
        <taxon>Bacteria</taxon>
        <taxon>Bacillati</taxon>
        <taxon>Chloroflexota</taxon>
        <taxon>Dehalococcoidia</taxon>
        <taxon>Dehalococcoidales</taxon>
        <taxon>Dehalococcoidaceae</taxon>
        <taxon>Dehalococcoides</taxon>
    </lineage>
</organism>
<proteinExistence type="inferred from homology"/>
<evidence type="ECO:0000255" key="1">
    <source>
        <dbReference type="HAMAP-Rule" id="MF_00528"/>
    </source>
</evidence>
<name>NTPPA_DEHM1</name>
<keyword id="KW-0963">Cytoplasm</keyword>
<keyword id="KW-0378">Hydrolase</keyword>
<keyword id="KW-0546">Nucleotide metabolism</keyword>
<accession>Q3Z7G4</accession>
<reference key="1">
    <citation type="journal article" date="2005" name="Science">
        <title>Genome sequence of the PCE-dechlorinating bacterium Dehalococcoides ethenogenes.</title>
        <authorList>
            <person name="Seshadri R."/>
            <person name="Adrian L."/>
            <person name="Fouts D.E."/>
            <person name="Eisen J.A."/>
            <person name="Phillippy A.M."/>
            <person name="Methe B.A."/>
            <person name="Ward N.L."/>
            <person name="Nelson W.C."/>
            <person name="DeBoy R.T."/>
            <person name="Khouri H.M."/>
            <person name="Kolonay J.F."/>
            <person name="Dodson R.J."/>
            <person name="Daugherty S.C."/>
            <person name="Brinkac L.M."/>
            <person name="Sullivan S.A."/>
            <person name="Madupu R."/>
            <person name="Nelson K.E."/>
            <person name="Kang K.H."/>
            <person name="Impraim M."/>
            <person name="Tran K."/>
            <person name="Robinson J.M."/>
            <person name="Forberger H.A."/>
            <person name="Fraser C.M."/>
            <person name="Zinder S.H."/>
            <person name="Heidelberg J.F."/>
        </authorList>
    </citation>
    <scope>NUCLEOTIDE SEQUENCE [LARGE SCALE GENOMIC DNA]</scope>
    <source>
        <strain>ATCC BAA-2266 / KCTC 15142 / 195</strain>
    </source>
</reference>
<gene>
    <name type="ordered locus">DET1120</name>
</gene>
<protein>
    <recommendedName>
        <fullName evidence="1">dTTP/UTP pyrophosphatase</fullName>
        <shortName evidence="1">dTTPase/UTPase</shortName>
        <ecNumber evidence="1">3.6.1.9</ecNumber>
    </recommendedName>
    <alternativeName>
        <fullName evidence="1">Nucleoside triphosphate pyrophosphatase</fullName>
    </alternativeName>
    <alternativeName>
        <fullName evidence="1">Nucleotide pyrophosphatase</fullName>
        <shortName evidence="1">Nucleotide PPase</shortName>
    </alternativeName>
</protein>
<dbReference type="EC" id="3.6.1.9" evidence="1"/>
<dbReference type="EMBL" id="CP000027">
    <property type="protein sequence ID" value="AAW39595.1"/>
    <property type="molecule type" value="Genomic_DNA"/>
</dbReference>
<dbReference type="RefSeq" id="WP_010936813.1">
    <property type="nucleotide sequence ID" value="NC_002936.3"/>
</dbReference>
<dbReference type="SMR" id="Q3Z7G4"/>
<dbReference type="FunCoup" id="Q3Z7G4">
    <property type="interactions" value="271"/>
</dbReference>
<dbReference type="STRING" id="243164.DET1120"/>
<dbReference type="GeneID" id="3229556"/>
<dbReference type="KEGG" id="det:DET1120"/>
<dbReference type="PATRIC" id="fig|243164.10.peg.1052"/>
<dbReference type="eggNOG" id="COG0424">
    <property type="taxonomic scope" value="Bacteria"/>
</dbReference>
<dbReference type="HOGENOM" id="CLU_040416_0_0_0"/>
<dbReference type="InParanoid" id="Q3Z7G4"/>
<dbReference type="Proteomes" id="UP000008289">
    <property type="component" value="Chromosome"/>
</dbReference>
<dbReference type="GO" id="GO:0005737">
    <property type="term" value="C:cytoplasm"/>
    <property type="evidence" value="ECO:0007669"/>
    <property type="project" value="UniProtKB-SubCell"/>
</dbReference>
<dbReference type="GO" id="GO:0036218">
    <property type="term" value="F:dTTP diphosphatase activity"/>
    <property type="evidence" value="ECO:0007669"/>
    <property type="project" value="RHEA"/>
</dbReference>
<dbReference type="GO" id="GO:0036221">
    <property type="term" value="F:UTP diphosphatase activity"/>
    <property type="evidence" value="ECO:0007669"/>
    <property type="project" value="RHEA"/>
</dbReference>
<dbReference type="GO" id="GO:0009117">
    <property type="term" value="P:nucleotide metabolic process"/>
    <property type="evidence" value="ECO:0007669"/>
    <property type="project" value="UniProtKB-KW"/>
</dbReference>
<dbReference type="CDD" id="cd00555">
    <property type="entry name" value="Maf"/>
    <property type="match status" value="1"/>
</dbReference>
<dbReference type="Gene3D" id="3.90.950.10">
    <property type="match status" value="1"/>
</dbReference>
<dbReference type="HAMAP" id="MF_00528">
    <property type="entry name" value="Maf"/>
    <property type="match status" value="1"/>
</dbReference>
<dbReference type="InterPro" id="IPR029001">
    <property type="entry name" value="ITPase-like_fam"/>
</dbReference>
<dbReference type="InterPro" id="IPR003697">
    <property type="entry name" value="Maf-like"/>
</dbReference>
<dbReference type="NCBIfam" id="TIGR00172">
    <property type="entry name" value="maf"/>
    <property type="match status" value="1"/>
</dbReference>
<dbReference type="PANTHER" id="PTHR43213">
    <property type="entry name" value="BIFUNCTIONAL DTTP/UTP PYROPHOSPHATASE/METHYLTRANSFERASE PROTEIN-RELATED"/>
    <property type="match status" value="1"/>
</dbReference>
<dbReference type="PANTHER" id="PTHR43213:SF5">
    <property type="entry name" value="BIFUNCTIONAL DTTP_UTP PYROPHOSPHATASE_METHYLTRANSFERASE PROTEIN-RELATED"/>
    <property type="match status" value="1"/>
</dbReference>
<dbReference type="Pfam" id="PF02545">
    <property type="entry name" value="Maf"/>
    <property type="match status" value="1"/>
</dbReference>
<dbReference type="PIRSF" id="PIRSF006305">
    <property type="entry name" value="Maf"/>
    <property type="match status" value="1"/>
</dbReference>
<dbReference type="SUPFAM" id="SSF52972">
    <property type="entry name" value="ITPase-like"/>
    <property type="match status" value="1"/>
</dbReference>
<sequence length="224" mass="24480">MPDCQNTNLPEIILASASPRRQQILREMGFTFSVCPSQAELHPDGSVAPAKFATLNAETKARDIARNTRQGLIIAADTVVVDTLGILGKPASPEEALNYLLRLGGKSHTVISGICLINTQNGQVRSGTCQSSLHMRPFTPAEAQRYVESGLPMDKAGAYGIQDREFEPVEKIEGCYLNVVGLPACTLVRLMKEMGFCPELHDNWQPEGDCTLCRIYRTGINQTC</sequence>
<feature type="chain" id="PRO_0000267295" description="dTTP/UTP pyrophosphatase">
    <location>
        <begin position="1"/>
        <end position="224"/>
    </location>
</feature>
<feature type="active site" description="Proton acceptor" evidence="1">
    <location>
        <position position="77"/>
    </location>
</feature>
<feature type="site" description="Important for substrate specificity" evidence="1">
    <location>
        <position position="20"/>
    </location>
</feature>
<feature type="site" description="Important for substrate specificity" evidence="1">
    <location>
        <position position="78"/>
    </location>
</feature>
<feature type="site" description="Important for substrate specificity" evidence="1">
    <location>
        <position position="162"/>
    </location>
</feature>
<comment type="function">
    <text evidence="1">Nucleoside triphosphate pyrophosphatase that hydrolyzes dTTP and UTP. May have a dual role in cell division arrest and in preventing the incorporation of modified nucleotides into cellular nucleic acids.</text>
</comment>
<comment type="catalytic activity">
    <reaction evidence="1">
        <text>dTTP + H2O = dTMP + diphosphate + H(+)</text>
        <dbReference type="Rhea" id="RHEA:28534"/>
        <dbReference type="ChEBI" id="CHEBI:15377"/>
        <dbReference type="ChEBI" id="CHEBI:15378"/>
        <dbReference type="ChEBI" id="CHEBI:33019"/>
        <dbReference type="ChEBI" id="CHEBI:37568"/>
        <dbReference type="ChEBI" id="CHEBI:63528"/>
        <dbReference type="EC" id="3.6.1.9"/>
    </reaction>
</comment>
<comment type="catalytic activity">
    <reaction evidence="1">
        <text>UTP + H2O = UMP + diphosphate + H(+)</text>
        <dbReference type="Rhea" id="RHEA:29395"/>
        <dbReference type="ChEBI" id="CHEBI:15377"/>
        <dbReference type="ChEBI" id="CHEBI:15378"/>
        <dbReference type="ChEBI" id="CHEBI:33019"/>
        <dbReference type="ChEBI" id="CHEBI:46398"/>
        <dbReference type="ChEBI" id="CHEBI:57865"/>
        <dbReference type="EC" id="3.6.1.9"/>
    </reaction>
</comment>
<comment type="cofactor">
    <cofactor evidence="1">
        <name>a divalent metal cation</name>
        <dbReference type="ChEBI" id="CHEBI:60240"/>
    </cofactor>
</comment>
<comment type="subcellular location">
    <subcellularLocation>
        <location evidence="1">Cytoplasm</location>
    </subcellularLocation>
</comment>
<comment type="similarity">
    <text evidence="1">Belongs to the Maf family. YhdE subfamily.</text>
</comment>